<proteinExistence type="inferred from homology"/>
<feature type="chain" id="PRO_0000390136" description="NADH-quinone oxidoreductase subunit K">
    <location>
        <begin position="1"/>
        <end position="99"/>
    </location>
</feature>
<feature type="transmembrane region" description="Helical" evidence="1">
    <location>
        <begin position="3"/>
        <end position="23"/>
    </location>
</feature>
<feature type="transmembrane region" description="Helical" evidence="1">
    <location>
        <begin position="28"/>
        <end position="48"/>
    </location>
</feature>
<feature type="transmembrane region" description="Helical" evidence="1">
    <location>
        <begin position="59"/>
        <end position="79"/>
    </location>
</feature>
<keyword id="KW-1003">Cell membrane</keyword>
<keyword id="KW-0472">Membrane</keyword>
<keyword id="KW-0520">NAD</keyword>
<keyword id="KW-0874">Quinone</keyword>
<keyword id="KW-1278">Translocase</keyword>
<keyword id="KW-0812">Transmembrane</keyword>
<keyword id="KW-1133">Transmembrane helix</keyword>
<keyword id="KW-0813">Transport</keyword>
<sequence length="99" mass="10816">MNPANYLYLSALLFTIGASGVLLRRNAIVMFMCVELMLNAVNLAFVTFARMHGHLDGQMIAFFTMVVAACEVVVGLAIIMTIFRTRKSASVDDANLLKG</sequence>
<accession>A0PR48</accession>
<gene>
    <name evidence="1" type="primary">nuoK</name>
    <name type="ordered locus">MUL_2469</name>
</gene>
<dbReference type="EC" id="7.1.1.-" evidence="1"/>
<dbReference type="EMBL" id="CP000325">
    <property type="protein sequence ID" value="ABL04817.1"/>
    <property type="molecule type" value="Genomic_DNA"/>
</dbReference>
<dbReference type="RefSeq" id="WP_011740432.1">
    <property type="nucleotide sequence ID" value="NC_008611.1"/>
</dbReference>
<dbReference type="SMR" id="A0PR48"/>
<dbReference type="KEGG" id="mul:MUL_2469"/>
<dbReference type="eggNOG" id="COG0713">
    <property type="taxonomic scope" value="Bacteria"/>
</dbReference>
<dbReference type="HOGENOM" id="CLU_144724_0_0_11"/>
<dbReference type="Proteomes" id="UP000000765">
    <property type="component" value="Chromosome"/>
</dbReference>
<dbReference type="GO" id="GO:0030964">
    <property type="term" value="C:NADH dehydrogenase complex"/>
    <property type="evidence" value="ECO:0007669"/>
    <property type="project" value="TreeGrafter"/>
</dbReference>
<dbReference type="GO" id="GO:0005886">
    <property type="term" value="C:plasma membrane"/>
    <property type="evidence" value="ECO:0007669"/>
    <property type="project" value="UniProtKB-SubCell"/>
</dbReference>
<dbReference type="GO" id="GO:0050136">
    <property type="term" value="F:NADH:ubiquinone reductase (non-electrogenic) activity"/>
    <property type="evidence" value="ECO:0007669"/>
    <property type="project" value="UniProtKB-UniRule"/>
</dbReference>
<dbReference type="GO" id="GO:0048038">
    <property type="term" value="F:quinone binding"/>
    <property type="evidence" value="ECO:0007669"/>
    <property type="project" value="UniProtKB-KW"/>
</dbReference>
<dbReference type="GO" id="GO:0042773">
    <property type="term" value="P:ATP synthesis coupled electron transport"/>
    <property type="evidence" value="ECO:0007669"/>
    <property type="project" value="InterPro"/>
</dbReference>
<dbReference type="FunFam" id="1.10.287.3510:FF:000001">
    <property type="entry name" value="NADH-quinone oxidoreductase subunit K"/>
    <property type="match status" value="1"/>
</dbReference>
<dbReference type="Gene3D" id="1.10.287.3510">
    <property type="match status" value="1"/>
</dbReference>
<dbReference type="HAMAP" id="MF_01456">
    <property type="entry name" value="NDH1_NuoK"/>
    <property type="match status" value="1"/>
</dbReference>
<dbReference type="InterPro" id="IPR001133">
    <property type="entry name" value="NADH_UbQ_OxRdtase_chain4L/K"/>
</dbReference>
<dbReference type="InterPro" id="IPR039428">
    <property type="entry name" value="NUOK/Mnh_C1-like"/>
</dbReference>
<dbReference type="NCBIfam" id="NF004320">
    <property type="entry name" value="PRK05715.1-2"/>
    <property type="match status" value="1"/>
</dbReference>
<dbReference type="NCBIfam" id="NF004321">
    <property type="entry name" value="PRK05715.1-3"/>
    <property type="match status" value="1"/>
</dbReference>
<dbReference type="PANTHER" id="PTHR11434:SF21">
    <property type="entry name" value="NADH DEHYDROGENASE SUBUNIT 4L-RELATED"/>
    <property type="match status" value="1"/>
</dbReference>
<dbReference type="PANTHER" id="PTHR11434">
    <property type="entry name" value="NADH-UBIQUINONE OXIDOREDUCTASE SUBUNIT ND4L"/>
    <property type="match status" value="1"/>
</dbReference>
<dbReference type="Pfam" id="PF00420">
    <property type="entry name" value="Oxidored_q2"/>
    <property type="match status" value="1"/>
</dbReference>
<reference key="1">
    <citation type="journal article" date="2007" name="Genome Res.">
        <title>Reductive evolution and niche adaptation inferred from the genome of Mycobacterium ulcerans, the causative agent of Buruli ulcer.</title>
        <authorList>
            <person name="Stinear T.P."/>
            <person name="Seemann T."/>
            <person name="Pidot S."/>
            <person name="Frigui W."/>
            <person name="Reysset G."/>
            <person name="Garnier T."/>
            <person name="Meurice G."/>
            <person name="Simon D."/>
            <person name="Bouchier C."/>
            <person name="Ma L."/>
            <person name="Tichit M."/>
            <person name="Porter J.L."/>
            <person name="Ryan J."/>
            <person name="Johnson P.D.R."/>
            <person name="Davies J.K."/>
            <person name="Jenkin G.A."/>
            <person name="Small P.L.C."/>
            <person name="Jones L.M."/>
            <person name="Tekaia F."/>
            <person name="Laval F."/>
            <person name="Daffe M."/>
            <person name="Parkhill J."/>
            <person name="Cole S.T."/>
        </authorList>
    </citation>
    <scope>NUCLEOTIDE SEQUENCE [LARGE SCALE GENOMIC DNA]</scope>
    <source>
        <strain>Agy99</strain>
    </source>
</reference>
<organism>
    <name type="scientific">Mycobacterium ulcerans (strain Agy99)</name>
    <dbReference type="NCBI Taxonomy" id="362242"/>
    <lineage>
        <taxon>Bacteria</taxon>
        <taxon>Bacillati</taxon>
        <taxon>Actinomycetota</taxon>
        <taxon>Actinomycetes</taxon>
        <taxon>Mycobacteriales</taxon>
        <taxon>Mycobacteriaceae</taxon>
        <taxon>Mycobacterium</taxon>
        <taxon>Mycobacterium ulcerans group</taxon>
    </lineage>
</organism>
<evidence type="ECO:0000255" key="1">
    <source>
        <dbReference type="HAMAP-Rule" id="MF_01456"/>
    </source>
</evidence>
<comment type="function">
    <text evidence="1">NDH-1 shuttles electrons from NADH, via FMN and iron-sulfur (Fe-S) centers, to quinones in the respiratory chain. The immediate electron acceptor for the enzyme in this species is believed to be a menaquinone. Couples the redox reaction to proton translocation (for every two electrons transferred, four hydrogen ions are translocated across the cytoplasmic membrane), and thus conserves the redox energy in a proton gradient.</text>
</comment>
<comment type="catalytic activity">
    <reaction evidence="1">
        <text>a quinone + NADH + 5 H(+)(in) = a quinol + NAD(+) + 4 H(+)(out)</text>
        <dbReference type="Rhea" id="RHEA:57888"/>
        <dbReference type="ChEBI" id="CHEBI:15378"/>
        <dbReference type="ChEBI" id="CHEBI:24646"/>
        <dbReference type="ChEBI" id="CHEBI:57540"/>
        <dbReference type="ChEBI" id="CHEBI:57945"/>
        <dbReference type="ChEBI" id="CHEBI:132124"/>
    </reaction>
</comment>
<comment type="subunit">
    <text evidence="1">NDH-1 is composed of 14 different subunits. Subunits NuoA, H, J, K, L, M, N constitute the membrane sector of the complex.</text>
</comment>
<comment type="subcellular location">
    <subcellularLocation>
        <location evidence="1">Cell membrane</location>
        <topology evidence="1">Multi-pass membrane protein</topology>
    </subcellularLocation>
</comment>
<comment type="similarity">
    <text evidence="1">Belongs to the complex I subunit 4L family.</text>
</comment>
<protein>
    <recommendedName>
        <fullName evidence="1">NADH-quinone oxidoreductase subunit K</fullName>
        <ecNumber evidence="1">7.1.1.-</ecNumber>
    </recommendedName>
    <alternativeName>
        <fullName evidence="1">NADH dehydrogenase I subunit K</fullName>
    </alternativeName>
    <alternativeName>
        <fullName evidence="1">NDH-1 subunit K</fullName>
    </alternativeName>
</protein>
<name>NUOK_MYCUA</name>